<protein>
    <recommendedName>
        <fullName evidence="1">NAD(P)H-quinone oxidoreductase subunit I, chloroplastic</fullName>
        <ecNumber evidence="1">7.1.1.-</ecNumber>
    </recommendedName>
    <alternativeName>
        <fullName evidence="1">NAD(P)H dehydrogenase subunit I</fullName>
        <shortName evidence="1">NDH subunit I</shortName>
    </alternativeName>
    <alternativeName>
        <fullName evidence="1">NADH-plastoquinone oxidoreductase subunit I</fullName>
    </alternativeName>
</protein>
<gene>
    <name evidence="1" type="primary">ndhI</name>
</gene>
<feature type="chain" id="PRO_0000298566" description="NAD(P)H-quinone oxidoreductase subunit I, chloroplastic">
    <location>
        <begin position="1"/>
        <end position="167"/>
    </location>
</feature>
<feature type="domain" description="4Fe-4S ferredoxin-type 1" evidence="1">
    <location>
        <begin position="55"/>
        <end position="84"/>
    </location>
</feature>
<feature type="domain" description="4Fe-4S ferredoxin-type 2" evidence="1">
    <location>
        <begin position="95"/>
        <end position="124"/>
    </location>
</feature>
<feature type="binding site" evidence="1">
    <location>
        <position position="64"/>
    </location>
    <ligand>
        <name>[4Fe-4S] cluster</name>
        <dbReference type="ChEBI" id="CHEBI:49883"/>
        <label>1</label>
    </ligand>
</feature>
<feature type="binding site" evidence="1">
    <location>
        <position position="67"/>
    </location>
    <ligand>
        <name>[4Fe-4S] cluster</name>
        <dbReference type="ChEBI" id="CHEBI:49883"/>
        <label>1</label>
    </ligand>
</feature>
<feature type="binding site" evidence="1">
    <location>
        <position position="70"/>
    </location>
    <ligand>
        <name>[4Fe-4S] cluster</name>
        <dbReference type="ChEBI" id="CHEBI:49883"/>
        <label>1</label>
    </ligand>
</feature>
<feature type="binding site" evidence="1">
    <location>
        <position position="74"/>
    </location>
    <ligand>
        <name>[4Fe-4S] cluster</name>
        <dbReference type="ChEBI" id="CHEBI:49883"/>
        <label>2</label>
    </ligand>
</feature>
<feature type="binding site" evidence="1">
    <location>
        <position position="104"/>
    </location>
    <ligand>
        <name>[4Fe-4S] cluster</name>
        <dbReference type="ChEBI" id="CHEBI:49883"/>
        <label>2</label>
    </ligand>
</feature>
<feature type="binding site" evidence="1">
    <location>
        <position position="107"/>
    </location>
    <ligand>
        <name>[4Fe-4S] cluster</name>
        <dbReference type="ChEBI" id="CHEBI:49883"/>
        <label>2</label>
    </ligand>
</feature>
<feature type="binding site" evidence="1">
    <location>
        <position position="110"/>
    </location>
    <ligand>
        <name>[4Fe-4S] cluster</name>
        <dbReference type="ChEBI" id="CHEBI:49883"/>
        <label>2</label>
    </ligand>
</feature>
<feature type="binding site" evidence="1">
    <location>
        <position position="114"/>
    </location>
    <ligand>
        <name>[4Fe-4S] cluster</name>
        <dbReference type="ChEBI" id="CHEBI:49883"/>
        <label>1</label>
    </ligand>
</feature>
<sequence length="167" mass="19524">MLPMITGFMNYGQQTLRAARYIGQGFMITLSHTNRLPVTIQYPYEKLIISERFRGRIHFEFDKCIACEVCVRVCPIDLPVVDWKLETHIRKKRLLNYSIDFGICIFCGNCVEYCPTNCLSMTEEYEFSTYDRHELNYNQIALGRLPMSVIDDYTIRTILNSPQIKNG</sequence>
<dbReference type="EC" id="7.1.1.-" evidence="1"/>
<dbReference type="EMBL" id="AP009367">
    <property type="protein sequence ID" value="BAF49909.1"/>
    <property type="molecule type" value="Genomic_DNA"/>
</dbReference>
<dbReference type="RefSeq" id="YP_001123084.1">
    <property type="nucleotide sequence ID" value="NC_009266.1"/>
</dbReference>
<dbReference type="SMR" id="A4QJQ4"/>
<dbReference type="GeneID" id="4962317"/>
<dbReference type="GO" id="GO:0009535">
    <property type="term" value="C:chloroplast thylakoid membrane"/>
    <property type="evidence" value="ECO:0007669"/>
    <property type="project" value="UniProtKB-SubCell"/>
</dbReference>
<dbReference type="GO" id="GO:0051539">
    <property type="term" value="F:4 iron, 4 sulfur cluster binding"/>
    <property type="evidence" value="ECO:0007669"/>
    <property type="project" value="UniProtKB-KW"/>
</dbReference>
<dbReference type="GO" id="GO:0005506">
    <property type="term" value="F:iron ion binding"/>
    <property type="evidence" value="ECO:0007669"/>
    <property type="project" value="UniProtKB-UniRule"/>
</dbReference>
<dbReference type="GO" id="GO:0008137">
    <property type="term" value="F:NADH dehydrogenase (ubiquinone) activity"/>
    <property type="evidence" value="ECO:0007669"/>
    <property type="project" value="InterPro"/>
</dbReference>
<dbReference type="GO" id="GO:0048038">
    <property type="term" value="F:quinone binding"/>
    <property type="evidence" value="ECO:0007669"/>
    <property type="project" value="UniProtKB-KW"/>
</dbReference>
<dbReference type="GO" id="GO:0019684">
    <property type="term" value="P:photosynthesis, light reaction"/>
    <property type="evidence" value="ECO:0007669"/>
    <property type="project" value="UniProtKB-UniRule"/>
</dbReference>
<dbReference type="FunFam" id="3.30.70.3270:FF:000006">
    <property type="entry name" value="NAD(P)H-quinone oxidoreductase subunit I, chloroplastic"/>
    <property type="match status" value="1"/>
</dbReference>
<dbReference type="Gene3D" id="3.30.70.3270">
    <property type="match status" value="1"/>
</dbReference>
<dbReference type="HAMAP" id="MF_01351">
    <property type="entry name" value="NDH1_NuoI"/>
    <property type="match status" value="1"/>
</dbReference>
<dbReference type="InterPro" id="IPR017896">
    <property type="entry name" value="4Fe4S_Fe-S-bd"/>
</dbReference>
<dbReference type="InterPro" id="IPR017900">
    <property type="entry name" value="4Fe4S_Fe_S_CS"/>
</dbReference>
<dbReference type="InterPro" id="IPR010226">
    <property type="entry name" value="NADH_quinone_OxRdtase_chainI"/>
</dbReference>
<dbReference type="InterPro" id="IPR004497">
    <property type="entry name" value="NDHI"/>
</dbReference>
<dbReference type="NCBIfam" id="TIGR00403">
    <property type="entry name" value="ndhI"/>
    <property type="match status" value="1"/>
</dbReference>
<dbReference type="NCBIfam" id="TIGR01971">
    <property type="entry name" value="NuoI"/>
    <property type="match status" value="1"/>
</dbReference>
<dbReference type="NCBIfam" id="NF004537">
    <property type="entry name" value="PRK05888.1-3"/>
    <property type="match status" value="1"/>
</dbReference>
<dbReference type="PANTHER" id="PTHR47275">
    <property type="entry name" value="NAD(P)H-QUINONE OXIDOREDUCTASE SUBUNIT I, CHLOROPLASTIC"/>
    <property type="match status" value="1"/>
</dbReference>
<dbReference type="PANTHER" id="PTHR47275:SF1">
    <property type="entry name" value="NAD(P)H-QUINONE OXIDOREDUCTASE SUBUNIT I, CHLOROPLASTIC"/>
    <property type="match status" value="1"/>
</dbReference>
<dbReference type="Pfam" id="PF00037">
    <property type="entry name" value="Fer4"/>
    <property type="match status" value="2"/>
</dbReference>
<dbReference type="SUPFAM" id="SSF54862">
    <property type="entry name" value="4Fe-4S ferredoxins"/>
    <property type="match status" value="1"/>
</dbReference>
<dbReference type="PROSITE" id="PS00198">
    <property type="entry name" value="4FE4S_FER_1"/>
    <property type="match status" value="2"/>
</dbReference>
<dbReference type="PROSITE" id="PS51379">
    <property type="entry name" value="4FE4S_FER_2"/>
    <property type="match status" value="2"/>
</dbReference>
<name>NDHI_AETGR</name>
<evidence type="ECO:0000255" key="1">
    <source>
        <dbReference type="HAMAP-Rule" id="MF_01351"/>
    </source>
</evidence>
<proteinExistence type="inferred from homology"/>
<reference key="1">
    <citation type="submission" date="2007-03" db="EMBL/GenBank/DDBJ databases">
        <title>Sequencing analysis of Aethionema grandiflorum chloroplast DNA.</title>
        <authorList>
            <person name="Hosouchi T."/>
            <person name="Tsuruoka H."/>
            <person name="Kotani H."/>
        </authorList>
    </citation>
    <scope>NUCLEOTIDE SEQUENCE [LARGE SCALE GENOMIC DNA]</scope>
</reference>
<comment type="function">
    <text evidence="1">NDH shuttles electrons from NAD(P)H:plastoquinone, via FMN and iron-sulfur (Fe-S) centers, to quinones in the photosynthetic chain and possibly in a chloroplast respiratory chain. The immediate electron acceptor for the enzyme in this species is believed to be plastoquinone. Couples the redox reaction to proton translocation, and thus conserves the redox energy in a proton gradient.</text>
</comment>
<comment type="catalytic activity">
    <reaction evidence="1">
        <text>a plastoquinone + NADH + (n+1) H(+)(in) = a plastoquinol + NAD(+) + n H(+)(out)</text>
        <dbReference type="Rhea" id="RHEA:42608"/>
        <dbReference type="Rhea" id="RHEA-COMP:9561"/>
        <dbReference type="Rhea" id="RHEA-COMP:9562"/>
        <dbReference type="ChEBI" id="CHEBI:15378"/>
        <dbReference type="ChEBI" id="CHEBI:17757"/>
        <dbReference type="ChEBI" id="CHEBI:57540"/>
        <dbReference type="ChEBI" id="CHEBI:57945"/>
        <dbReference type="ChEBI" id="CHEBI:62192"/>
    </reaction>
</comment>
<comment type="catalytic activity">
    <reaction evidence="1">
        <text>a plastoquinone + NADPH + (n+1) H(+)(in) = a plastoquinol + NADP(+) + n H(+)(out)</text>
        <dbReference type="Rhea" id="RHEA:42612"/>
        <dbReference type="Rhea" id="RHEA-COMP:9561"/>
        <dbReference type="Rhea" id="RHEA-COMP:9562"/>
        <dbReference type="ChEBI" id="CHEBI:15378"/>
        <dbReference type="ChEBI" id="CHEBI:17757"/>
        <dbReference type="ChEBI" id="CHEBI:57783"/>
        <dbReference type="ChEBI" id="CHEBI:58349"/>
        <dbReference type="ChEBI" id="CHEBI:62192"/>
    </reaction>
</comment>
<comment type="cofactor">
    <cofactor evidence="1">
        <name>[4Fe-4S] cluster</name>
        <dbReference type="ChEBI" id="CHEBI:49883"/>
    </cofactor>
    <text evidence="1">Binds 2 [4Fe-4S] clusters per subunit.</text>
</comment>
<comment type="subunit">
    <text evidence="1">NDH is composed of at least 16 different subunits, 5 of which are encoded in the nucleus.</text>
</comment>
<comment type="subcellular location">
    <subcellularLocation>
        <location evidence="1">Plastid</location>
        <location evidence="1">Chloroplast thylakoid membrane</location>
        <topology evidence="1">Peripheral membrane protein</topology>
    </subcellularLocation>
</comment>
<comment type="similarity">
    <text evidence="1">Belongs to the complex I 23 kDa subunit family.</text>
</comment>
<organism>
    <name type="scientific">Aethionema grandiflorum</name>
    <name type="common">Persian stone-cress</name>
    <dbReference type="NCBI Taxonomy" id="72657"/>
    <lineage>
        <taxon>Eukaryota</taxon>
        <taxon>Viridiplantae</taxon>
        <taxon>Streptophyta</taxon>
        <taxon>Embryophyta</taxon>
        <taxon>Tracheophyta</taxon>
        <taxon>Spermatophyta</taxon>
        <taxon>Magnoliopsida</taxon>
        <taxon>eudicotyledons</taxon>
        <taxon>Gunneridae</taxon>
        <taxon>Pentapetalae</taxon>
        <taxon>rosids</taxon>
        <taxon>malvids</taxon>
        <taxon>Brassicales</taxon>
        <taxon>Brassicaceae</taxon>
        <taxon>Aethionemeae</taxon>
        <taxon>Aethionema</taxon>
    </lineage>
</organism>
<geneLocation type="chloroplast"/>
<keyword id="KW-0004">4Fe-4S</keyword>
<keyword id="KW-0150">Chloroplast</keyword>
<keyword id="KW-0408">Iron</keyword>
<keyword id="KW-0411">Iron-sulfur</keyword>
<keyword id="KW-0472">Membrane</keyword>
<keyword id="KW-0479">Metal-binding</keyword>
<keyword id="KW-0520">NAD</keyword>
<keyword id="KW-0521">NADP</keyword>
<keyword id="KW-0934">Plastid</keyword>
<keyword id="KW-0618">Plastoquinone</keyword>
<keyword id="KW-0874">Quinone</keyword>
<keyword id="KW-0677">Repeat</keyword>
<keyword id="KW-0793">Thylakoid</keyword>
<keyword id="KW-1278">Translocase</keyword>
<accession>A4QJQ4</accession>